<sequence>MKVLILLGLVLLSVMVQGKVFERCELARTLKRLGLDGYRGISLANWMCLAKWESDYNTRATNYNPGDQSTDYGIFQINSHYWCNNGRTPGAVNACHISCNALLQDDITEAVACAKRVVRDPQGIRAWVAWKAHCQNRDVSQYIQGCGV</sequence>
<protein>
    <recommendedName>
        <fullName>Lysozyme C</fullName>
        <ecNumber>3.2.1.17</ecNumber>
    </recommendedName>
    <alternativeName>
        <fullName>1,4-beta-N-acetylmuramidase C</fullName>
    </alternativeName>
</protein>
<evidence type="ECO:0000250" key="1"/>
<evidence type="ECO:0000255" key="2">
    <source>
        <dbReference type="PROSITE-ProRule" id="PRU00680"/>
    </source>
</evidence>
<proteinExistence type="evidence at transcript level"/>
<organism>
    <name type="scientific">Saguinus oedipus</name>
    <name type="common">Cotton-top tamarin</name>
    <dbReference type="NCBI Taxonomy" id="9490"/>
    <lineage>
        <taxon>Eukaryota</taxon>
        <taxon>Metazoa</taxon>
        <taxon>Chordata</taxon>
        <taxon>Craniata</taxon>
        <taxon>Vertebrata</taxon>
        <taxon>Euteleostomi</taxon>
        <taxon>Mammalia</taxon>
        <taxon>Eutheria</taxon>
        <taxon>Euarchontoglires</taxon>
        <taxon>Primates</taxon>
        <taxon>Haplorrhini</taxon>
        <taxon>Platyrrhini</taxon>
        <taxon>Cebidae</taxon>
        <taxon>Callitrichinae</taxon>
        <taxon>Saguinus</taxon>
    </lineage>
</organism>
<keyword id="KW-0929">Antimicrobial</keyword>
<keyword id="KW-0081">Bacteriolytic enzyme</keyword>
<keyword id="KW-1015">Disulfide bond</keyword>
<keyword id="KW-0326">Glycosidase</keyword>
<keyword id="KW-0378">Hydrolase</keyword>
<keyword id="KW-0964">Secreted</keyword>
<keyword id="KW-0732">Signal</keyword>
<feature type="signal peptide" evidence="1">
    <location>
        <begin position="1"/>
        <end position="18"/>
    </location>
</feature>
<feature type="chain" id="PRO_0000018486" description="Lysozyme C">
    <location>
        <begin position="19"/>
        <end position="148"/>
    </location>
</feature>
<feature type="domain" description="C-type lysozyme" evidence="2">
    <location>
        <begin position="19"/>
        <end position="148"/>
    </location>
</feature>
<feature type="active site" evidence="2">
    <location>
        <position position="53"/>
    </location>
</feature>
<feature type="active site" evidence="2">
    <location>
        <position position="71"/>
    </location>
</feature>
<feature type="disulfide bond" evidence="2">
    <location>
        <begin position="24"/>
        <end position="146"/>
    </location>
</feature>
<feature type="disulfide bond" evidence="2">
    <location>
        <begin position="48"/>
        <end position="134"/>
    </location>
</feature>
<feature type="disulfide bond" evidence="2">
    <location>
        <begin position="83"/>
        <end position="99"/>
    </location>
</feature>
<feature type="disulfide bond" evidence="2">
    <location>
        <begin position="95"/>
        <end position="113"/>
    </location>
</feature>
<dbReference type="EC" id="3.2.1.17"/>
<dbReference type="EMBL" id="U76922">
    <property type="protein sequence ID" value="AAB41210.1"/>
    <property type="molecule type" value="mRNA"/>
</dbReference>
<dbReference type="PIR" id="T11572">
    <property type="entry name" value="T11572"/>
</dbReference>
<dbReference type="SMR" id="P79268"/>
<dbReference type="CAZy" id="GH22">
    <property type="family name" value="Glycoside Hydrolase Family 22"/>
</dbReference>
<dbReference type="GO" id="GO:0005576">
    <property type="term" value="C:extracellular region"/>
    <property type="evidence" value="ECO:0007669"/>
    <property type="project" value="UniProtKB-SubCell"/>
</dbReference>
<dbReference type="GO" id="GO:0003796">
    <property type="term" value="F:lysozyme activity"/>
    <property type="evidence" value="ECO:0007669"/>
    <property type="project" value="UniProtKB-EC"/>
</dbReference>
<dbReference type="GO" id="GO:0050829">
    <property type="term" value="P:defense response to Gram-negative bacterium"/>
    <property type="evidence" value="ECO:0007669"/>
    <property type="project" value="TreeGrafter"/>
</dbReference>
<dbReference type="GO" id="GO:0050830">
    <property type="term" value="P:defense response to Gram-positive bacterium"/>
    <property type="evidence" value="ECO:0007669"/>
    <property type="project" value="TreeGrafter"/>
</dbReference>
<dbReference type="GO" id="GO:0031640">
    <property type="term" value="P:killing of cells of another organism"/>
    <property type="evidence" value="ECO:0007669"/>
    <property type="project" value="UniProtKB-KW"/>
</dbReference>
<dbReference type="CDD" id="cd16897">
    <property type="entry name" value="LYZ_C"/>
    <property type="match status" value="1"/>
</dbReference>
<dbReference type="FunFam" id="1.10.530.10:FF:000001">
    <property type="entry name" value="Lysozyme C"/>
    <property type="match status" value="1"/>
</dbReference>
<dbReference type="Gene3D" id="1.10.530.10">
    <property type="match status" value="1"/>
</dbReference>
<dbReference type="InterPro" id="IPR001916">
    <property type="entry name" value="Glyco_hydro_22"/>
</dbReference>
<dbReference type="InterPro" id="IPR019799">
    <property type="entry name" value="Glyco_hydro_22_CS"/>
</dbReference>
<dbReference type="InterPro" id="IPR000974">
    <property type="entry name" value="Glyco_hydro_22_lys"/>
</dbReference>
<dbReference type="InterPro" id="IPR023346">
    <property type="entry name" value="Lysozyme-like_dom_sf"/>
</dbReference>
<dbReference type="PANTHER" id="PTHR11407">
    <property type="entry name" value="LYSOZYME C"/>
    <property type="match status" value="1"/>
</dbReference>
<dbReference type="PANTHER" id="PTHR11407:SF28">
    <property type="entry name" value="LYSOZYME C"/>
    <property type="match status" value="1"/>
</dbReference>
<dbReference type="Pfam" id="PF00062">
    <property type="entry name" value="Lys"/>
    <property type="match status" value="1"/>
</dbReference>
<dbReference type="PRINTS" id="PR00137">
    <property type="entry name" value="LYSOZYME"/>
</dbReference>
<dbReference type="PRINTS" id="PR00135">
    <property type="entry name" value="LYZLACT"/>
</dbReference>
<dbReference type="SMART" id="SM00263">
    <property type="entry name" value="LYZ1"/>
    <property type="match status" value="1"/>
</dbReference>
<dbReference type="SUPFAM" id="SSF53955">
    <property type="entry name" value="Lysozyme-like"/>
    <property type="match status" value="1"/>
</dbReference>
<dbReference type="PROSITE" id="PS00128">
    <property type="entry name" value="GLYCOSYL_HYDROL_F22_1"/>
    <property type="match status" value="1"/>
</dbReference>
<dbReference type="PROSITE" id="PS51348">
    <property type="entry name" value="GLYCOSYL_HYDROL_F22_2"/>
    <property type="match status" value="1"/>
</dbReference>
<gene>
    <name type="primary">LYZ</name>
    <name type="synonym">LZM</name>
</gene>
<comment type="function">
    <text>Lysozymes have primarily a bacteriolytic function; those in tissues and body fluids are associated with the monocyte-macrophage system and enhance the activity of immunoagents.</text>
</comment>
<comment type="catalytic activity">
    <reaction>
        <text>Hydrolysis of (1-&gt;4)-beta-linkages between N-acetylmuramic acid and N-acetyl-D-glucosamine residues in a peptidoglycan and between N-acetyl-D-glucosamine residues in chitodextrins.</text>
        <dbReference type="EC" id="3.2.1.17"/>
    </reaction>
</comment>
<comment type="subunit">
    <text>Monomer.</text>
</comment>
<comment type="subcellular location">
    <subcellularLocation>
        <location evidence="1">Secreted</location>
    </subcellularLocation>
</comment>
<comment type="miscellaneous">
    <text>Lysozyme C is capable of both hydrolysis and transglycosylation; it also shows a slight esterase activity. It acts rapidly on both peptide-substituted and unsubstituted peptidoglycan, and slowly on chitin oligosaccharides.</text>
</comment>
<comment type="similarity">
    <text evidence="2">Belongs to the glycosyl hydrolase 22 family.</text>
</comment>
<name>LYSC_SAGOE</name>
<accession>P79268</accession>
<reference key="1">
    <citation type="journal article" date="1997" name="Nature">
        <title>Episodic adaptive evolution of primate lysozymes.</title>
        <authorList>
            <person name="Messier W."/>
            <person name="Stewart C.B."/>
        </authorList>
    </citation>
    <scope>NUCLEOTIDE SEQUENCE [MRNA]</scope>
    <source>
        <tissue>Blood</tissue>
    </source>
</reference>